<reference key="1">
    <citation type="journal article" date="2007" name="Nat. Biotechnol.">
        <title>Complete genome sequence of the myxobacterium Sorangium cellulosum.</title>
        <authorList>
            <person name="Schneiker S."/>
            <person name="Perlova O."/>
            <person name="Kaiser O."/>
            <person name="Gerth K."/>
            <person name="Alici A."/>
            <person name="Altmeyer M.O."/>
            <person name="Bartels D."/>
            <person name="Bekel T."/>
            <person name="Beyer S."/>
            <person name="Bode E."/>
            <person name="Bode H.B."/>
            <person name="Bolten C.J."/>
            <person name="Choudhuri J.V."/>
            <person name="Doss S."/>
            <person name="Elnakady Y.A."/>
            <person name="Frank B."/>
            <person name="Gaigalat L."/>
            <person name="Goesmann A."/>
            <person name="Groeger C."/>
            <person name="Gross F."/>
            <person name="Jelsbak L."/>
            <person name="Jelsbak L."/>
            <person name="Kalinowski J."/>
            <person name="Kegler C."/>
            <person name="Knauber T."/>
            <person name="Konietzny S."/>
            <person name="Kopp M."/>
            <person name="Krause L."/>
            <person name="Krug D."/>
            <person name="Linke B."/>
            <person name="Mahmud T."/>
            <person name="Martinez-Arias R."/>
            <person name="McHardy A.C."/>
            <person name="Merai M."/>
            <person name="Meyer F."/>
            <person name="Mormann S."/>
            <person name="Munoz-Dorado J."/>
            <person name="Perez J."/>
            <person name="Pradella S."/>
            <person name="Rachid S."/>
            <person name="Raddatz G."/>
            <person name="Rosenau F."/>
            <person name="Rueckert C."/>
            <person name="Sasse F."/>
            <person name="Scharfe M."/>
            <person name="Schuster S.C."/>
            <person name="Suen G."/>
            <person name="Treuner-Lange A."/>
            <person name="Velicer G.J."/>
            <person name="Vorholter F.-J."/>
            <person name="Weissman K.J."/>
            <person name="Welch R.D."/>
            <person name="Wenzel S.C."/>
            <person name="Whitworth D.E."/>
            <person name="Wilhelm S."/>
            <person name="Wittmann C."/>
            <person name="Bloecker H."/>
            <person name="Puehler A."/>
            <person name="Mueller R."/>
        </authorList>
    </citation>
    <scope>NUCLEOTIDE SEQUENCE [LARGE SCALE GENOMIC DNA]</scope>
    <source>
        <strain>So ce56</strain>
    </source>
</reference>
<dbReference type="EC" id="5.6.1.7" evidence="1"/>
<dbReference type="EMBL" id="AM746676">
    <property type="protein sequence ID" value="CAN92940.1"/>
    <property type="molecule type" value="Genomic_DNA"/>
</dbReference>
<dbReference type="RefSeq" id="WP_012235413.1">
    <property type="nucleotide sequence ID" value="NC_010162.1"/>
</dbReference>
<dbReference type="SMR" id="A9GB11"/>
<dbReference type="STRING" id="448385.sce2781"/>
<dbReference type="KEGG" id="scl:sce2781"/>
<dbReference type="eggNOG" id="COG0459">
    <property type="taxonomic scope" value="Bacteria"/>
</dbReference>
<dbReference type="HOGENOM" id="CLU_016503_3_0_7"/>
<dbReference type="OrthoDB" id="5481925at2"/>
<dbReference type="BioCyc" id="SCEL448385:SCE_RS14265-MONOMER"/>
<dbReference type="Proteomes" id="UP000002139">
    <property type="component" value="Chromosome"/>
</dbReference>
<dbReference type="GO" id="GO:0005737">
    <property type="term" value="C:cytoplasm"/>
    <property type="evidence" value="ECO:0007669"/>
    <property type="project" value="UniProtKB-SubCell"/>
</dbReference>
<dbReference type="GO" id="GO:0005524">
    <property type="term" value="F:ATP binding"/>
    <property type="evidence" value="ECO:0007669"/>
    <property type="project" value="UniProtKB-UniRule"/>
</dbReference>
<dbReference type="GO" id="GO:0140662">
    <property type="term" value="F:ATP-dependent protein folding chaperone"/>
    <property type="evidence" value="ECO:0007669"/>
    <property type="project" value="InterPro"/>
</dbReference>
<dbReference type="GO" id="GO:0016853">
    <property type="term" value="F:isomerase activity"/>
    <property type="evidence" value="ECO:0007669"/>
    <property type="project" value="UniProtKB-KW"/>
</dbReference>
<dbReference type="GO" id="GO:0051082">
    <property type="term" value="F:unfolded protein binding"/>
    <property type="evidence" value="ECO:0007669"/>
    <property type="project" value="UniProtKB-UniRule"/>
</dbReference>
<dbReference type="GO" id="GO:0042026">
    <property type="term" value="P:protein refolding"/>
    <property type="evidence" value="ECO:0007669"/>
    <property type="project" value="UniProtKB-UniRule"/>
</dbReference>
<dbReference type="CDD" id="cd03344">
    <property type="entry name" value="GroEL"/>
    <property type="match status" value="1"/>
</dbReference>
<dbReference type="FunFam" id="3.50.7.10:FF:000001">
    <property type="entry name" value="60 kDa chaperonin"/>
    <property type="match status" value="1"/>
</dbReference>
<dbReference type="Gene3D" id="3.50.7.10">
    <property type="entry name" value="GroEL"/>
    <property type="match status" value="1"/>
</dbReference>
<dbReference type="Gene3D" id="1.10.560.10">
    <property type="entry name" value="GroEL-like equatorial domain"/>
    <property type="match status" value="1"/>
</dbReference>
<dbReference type="Gene3D" id="3.30.260.10">
    <property type="entry name" value="TCP-1-like chaperonin intermediate domain"/>
    <property type="match status" value="1"/>
</dbReference>
<dbReference type="HAMAP" id="MF_00600">
    <property type="entry name" value="CH60"/>
    <property type="match status" value="1"/>
</dbReference>
<dbReference type="InterPro" id="IPR018370">
    <property type="entry name" value="Chaperonin_Cpn60_CS"/>
</dbReference>
<dbReference type="InterPro" id="IPR001844">
    <property type="entry name" value="Cpn60/GroEL"/>
</dbReference>
<dbReference type="InterPro" id="IPR002423">
    <property type="entry name" value="Cpn60/GroEL/TCP-1"/>
</dbReference>
<dbReference type="InterPro" id="IPR027409">
    <property type="entry name" value="GroEL-like_apical_dom_sf"/>
</dbReference>
<dbReference type="InterPro" id="IPR027413">
    <property type="entry name" value="GROEL-like_equatorial_sf"/>
</dbReference>
<dbReference type="InterPro" id="IPR027410">
    <property type="entry name" value="TCP-1-like_intermed_sf"/>
</dbReference>
<dbReference type="NCBIfam" id="TIGR02348">
    <property type="entry name" value="GroEL"/>
    <property type="match status" value="1"/>
</dbReference>
<dbReference type="NCBIfam" id="NF000592">
    <property type="entry name" value="PRK00013.1"/>
    <property type="match status" value="1"/>
</dbReference>
<dbReference type="NCBIfam" id="NF009487">
    <property type="entry name" value="PRK12849.1"/>
    <property type="match status" value="1"/>
</dbReference>
<dbReference type="NCBIfam" id="NF009488">
    <property type="entry name" value="PRK12850.1"/>
    <property type="match status" value="1"/>
</dbReference>
<dbReference type="NCBIfam" id="NF009489">
    <property type="entry name" value="PRK12851.1"/>
    <property type="match status" value="1"/>
</dbReference>
<dbReference type="PANTHER" id="PTHR45633">
    <property type="entry name" value="60 KDA HEAT SHOCK PROTEIN, MITOCHONDRIAL"/>
    <property type="match status" value="1"/>
</dbReference>
<dbReference type="Pfam" id="PF00118">
    <property type="entry name" value="Cpn60_TCP1"/>
    <property type="match status" value="1"/>
</dbReference>
<dbReference type="PRINTS" id="PR00298">
    <property type="entry name" value="CHAPERONIN60"/>
</dbReference>
<dbReference type="SUPFAM" id="SSF52029">
    <property type="entry name" value="GroEL apical domain-like"/>
    <property type="match status" value="1"/>
</dbReference>
<dbReference type="SUPFAM" id="SSF48592">
    <property type="entry name" value="GroEL equatorial domain-like"/>
    <property type="match status" value="1"/>
</dbReference>
<dbReference type="SUPFAM" id="SSF54849">
    <property type="entry name" value="GroEL-intermediate domain like"/>
    <property type="match status" value="1"/>
</dbReference>
<dbReference type="PROSITE" id="PS00296">
    <property type="entry name" value="CHAPERONINS_CPN60"/>
    <property type="match status" value="1"/>
</dbReference>
<proteinExistence type="inferred from homology"/>
<comment type="function">
    <text evidence="1">Together with its co-chaperonin GroES, plays an essential role in assisting protein folding. The GroEL-GroES system forms a nano-cage that allows encapsulation of the non-native substrate proteins and provides a physical environment optimized to promote and accelerate protein folding.</text>
</comment>
<comment type="catalytic activity">
    <reaction evidence="1">
        <text>ATP + H2O + a folded polypeptide = ADP + phosphate + an unfolded polypeptide.</text>
        <dbReference type="EC" id="5.6.1.7"/>
    </reaction>
</comment>
<comment type="subunit">
    <text evidence="1">Forms a cylinder of 14 subunits composed of two heptameric rings stacked back-to-back. Interacts with the co-chaperonin GroES.</text>
</comment>
<comment type="subcellular location">
    <subcellularLocation>
        <location evidence="1">Cytoplasm</location>
    </subcellularLocation>
</comment>
<comment type="similarity">
    <text evidence="1">Belongs to the chaperonin (HSP60) family.</text>
</comment>
<organism>
    <name type="scientific">Sorangium cellulosum (strain So ce56)</name>
    <name type="common">Polyangium cellulosum (strain So ce56)</name>
    <dbReference type="NCBI Taxonomy" id="448385"/>
    <lineage>
        <taxon>Bacteria</taxon>
        <taxon>Pseudomonadati</taxon>
        <taxon>Myxococcota</taxon>
        <taxon>Polyangia</taxon>
        <taxon>Polyangiales</taxon>
        <taxon>Polyangiaceae</taxon>
        <taxon>Sorangium</taxon>
    </lineage>
</organism>
<sequence length="562" mass="58906">MAAKQIVFSRGARAAILKGVNTLADAVKVTLGPKGRNVVIEKSWGSPVVTKDGVTVAKEVELAGKLENMGAQMVREVASKTSDKAGDGTTTATVLAQAIFGEGLKLVEAGHNPMDLKRGIDAAVAKVIEAVQKAAKPTKDKDQIAQVATVSANGDKEIGQILADAMEKVGKEGVITVEENKRMTTELETVDGMQFDRGYLSPYFVTDPEKMTAVLTNPLILVHEKKISAMADLLPLLEQVVKQGRELLILSEDVEGEALATLVVNKLRGTIKVAAVKAPGFGDRRKDMLKDIAILTGATPFMEDLGQKLESATVRDLGTAKRVEIDKDNTVIVDGQGDKTAIKGRIEAIRKQIADTTSDYDREKLQERLAKLAGGVAVVKVGAATETEMKEKKARVEDALHATRAAVEEGIVVGGGVALFRAAASLESLKFNDERDVGVRLVRRAVEAPLRQIAQNAGVDGTVVAEKVRSGAPTFGYNAATDSYEDLLAGGVIDPAKVVRHAISNAASVAALMLTTEALVAEKPKKEKAAAGGAPGGMGGMGGMGGMGGMGGMGGMGDFDMG</sequence>
<feature type="chain" id="PRO_0000332088" description="Chaperonin GroEL 1">
    <location>
        <begin position="1"/>
        <end position="562"/>
    </location>
</feature>
<feature type="binding site" evidence="1">
    <location>
        <begin position="30"/>
        <end position="33"/>
    </location>
    <ligand>
        <name>ATP</name>
        <dbReference type="ChEBI" id="CHEBI:30616"/>
    </ligand>
</feature>
<feature type="binding site" evidence="1">
    <location>
        <position position="51"/>
    </location>
    <ligand>
        <name>ATP</name>
        <dbReference type="ChEBI" id="CHEBI:30616"/>
    </ligand>
</feature>
<feature type="binding site" evidence="1">
    <location>
        <begin position="87"/>
        <end position="91"/>
    </location>
    <ligand>
        <name>ATP</name>
        <dbReference type="ChEBI" id="CHEBI:30616"/>
    </ligand>
</feature>
<feature type="binding site" evidence="1">
    <location>
        <position position="415"/>
    </location>
    <ligand>
        <name>ATP</name>
        <dbReference type="ChEBI" id="CHEBI:30616"/>
    </ligand>
</feature>
<feature type="binding site" evidence="1">
    <location>
        <begin position="478"/>
        <end position="480"/>
    </location>
    <ligand>
        <name>ATP</name>
        <dbReference type="ChEBI" id="CHEBI:30616"/>
    </ligand>
</feature>
<feature type="binding site" evidence="1">
    <location>
        <position position="494"/>
    </location>
    <ligand>
        <name>ATP</name>
        <dbReference type="ChEBI" id="CHEBI:30616"/>
    </ligand>
</feature>
<evidence type="ECO:0000255" key="1">
    <source>
        <dbReference type="HAMAP-Rule" id="MF_00600"/>
    </source>
</evidence>
<protein>
    <recommendedName>
        <fullName evidence="1">Chaperonin GroEL 1</fullName>
        <ecNumber evidence="1">5.6.1.7</ecNumber>
    </recommendedName>
    <alternativeName>
        <fullName evidence="1">60 kDa chaperonin 1</fullName>
    </alternativeName>
    <alternativeName>
        <fullName evidence="1">Chaperonin-60 1</fullName>
        <shortName evidence="1">Cpn60 1</shortName>
    </alternativeName>
</protein>
<keyword id="KW-0067">ATP-binding</keyword>
<keyword id="KW-0143">Chaperone</keyword>
<keyword id="KW-0963">Cytoplasm</keyword>
<keyword id="KW-0413">Isomerase</keyword>
<keyword id="KW-0547">Nucleotide-binding</keyword>
<keyword id="KW-1185">Reference proteome</keyword>
<accession>A9GB11</accession>
<gene>
    <name evidence="1" type="primary">groEL1</name>
    <name evidence="1" type="synonym">groL1</name>
    <name type="ordered locus">sce2781</name>
</gene>
<name>CH601_SORC5</name>